<protein>
    <recommendedName>
        <fullName evidence="1">Pantothenate kinase</fullName>
        <ecNumber evidence="1">2.7.1.33</ecNumber>
    </recommendedName>
    <alternativeName>
        <fullName evidence="1">Pantothenic acid kinase</fullName>
    </alternativeName>
</protein>
<evidence type="ECO:0000255" key="1">
    <source>
        <dbReference type="HAMAP-Rule" id="MF_00215"/>
    </source>
</evidence>
<reference key="1">
    <citation type="journal article" date="2009" name="PLoS Pathog.">
        <title>Genomic evidence for the evolution of Streptococcus equi: host restriction, increased virulence, and genetic exchange with human pathogens.</title>
        <authorList>
            <person name="Holden M.T.G."/>
            <person name="Heather Z."/>
            <person name="Paillot R."/>
            <person name="Steward K.F."/>
            <person name="Webb K."/>
            <person name="Ainslie F."/>
            <person name="Jourdan T."/>
            <person name="Bason N.C."/>
            <person name="Holroyd N.E."/>
            <person name="Mungall K."/>
            <person name="Quail M.A."/>
            <person name="Sanders M."/>
            <person name="Simmonds M."/>
            <person name="Willey D."/>
            <person name="Brooks K."/>
            <person name="Aanensen D.M."/>
            <person name="Spratt B.G."/>
            <person name="Jolley K.A."/>
            <person name="Maiden M.C.J."/>
            <person name="Kehoe M."/>
            <person name="Chanter N."/>
            <person name="Bentley S.D."/>
            <person name="Robinson C."/>
            <person name="Maskell D.J."/>
            <person name="Parkhill J."/>
            <person name="Waller A.S."/>
        </authorList>
    </citation>
    <scope>NUCLEOTIDE SEQUENCE [LARGE SCALE GENOMIC DNA]</scope>
    <source>
        <strain>4047</strain>
    </source>
</reference>
<organism>
    <name type="scientific">Streptococcus equi subsp. equi (strain 4047)</name>
    <dbReference type="NCBI Taxonomy" id="553482"/>
    <lineage>
        <taxon>Bacteria</taxon>
        <taxon>Bacillati</taxon>
        <taxon>Bacillota</taxon>
        <taxon>Bacilli</taxon>
        <taxon>Lactobacillales</taxon>
        <taxon>Streptococcaceae</taxon>
        <taxon>Streptococcus</taxon>
    </lineage>
</organism>
<proteinExistence type="inferred from homology"/>
<feature type="chain" id="PRO_1000124808" description="Pantothenate kinase">
    <location>
        <begin position="1"/>
        <end position="306"/>
    </location>
</feature>
<feature type="binding site" evidence="1">
    <location>
        <begin position="91"/>
        <end position="98"/>
    </location>
    <ligand>
        <name>ATP</name>
        <dbReference type="ChEBI" id="CHEBI:30616"/>
    </ligand>
</feature>
<keyword id="KW-0067">ATP-binding</keyword>
<keyword id="KW-0173">Coenzyme A biosynthesis</keyword>
<keyword id="KW-0963">Cytoplasm</keyword>
<keyword id="KW-0418">Kinase</keyword>
<keyword id="KW-0547">Nucleotide-binding</keyword>
<keyword id="KW-0808">Transferase</keyword>
<comment type="catalytic activity">
    <reaction evidence="1">
        <text>(R)-pantothenate + ATP = (R)-4'-phosphopantothenate + ADP + H(+)</text>
        <dbReference type="Rhea" id="RHEA:16373"/>
        <dbReference type="ChEBI" id="CHEBI:10986"/>
        <dbReference type="ChEBI" id="CHEBI:15378"/>
        <dbReference type="ChEBI" id="CHEBI:29032"/>
        <dbReference type="ChEBI" id="CHEBI:30616"/>
        <dbReference type="ChEBI" id="CHEBI:456216"/>
        <dbReference type="EC" id="2.7.1.33"/>
    </reaction>
</comment>
<comment type="pathway">
    <text evidence="1">Cofactor biosynthesis; coenzyme A biosynthesis; CoA from (R)-pantothenate: step 1/5.</text>
</comment>
<comment type="subcellular location">
    <subcellularLocation>
        <location evidence="1">Cytoplasm</location>
    </subcellularLocation>
</comment>
<comment type="similarity">
    <text evidence="1">Belongs to the prokaryotic pantothenate kinase family.</text>
</comment>
<gene>
    <name evidence="1" type="primary">coaA</name>
    <name type="ordered locus">SEQ_1056</name>
</gene>
<name>COAA_STRE4</name>
<dbReference type="EC" id="2.7.1.33" evidence="1"/>
<dbReference type="EMBL" id="FM204883">
    <property type="protein sequence ID" value="CAW93680.1"/>
    <property type="molecule type" value="Genomic_DNA"/>
</dbReference>
<dbReference type="RefSeq" id="WP_012679484.1">
    <property type="nucleotide sequence ID" value="NC_012471.1"/>
</dbReference>
<dbReference type="SMR" id="C0M9A7"/>
<dbReference type="KEGG" id="seu:SEQ_1056"/>
<dbReference type="HOGENOM" id="CLU_053818_1_1_9"/>
<dbReference type="OrthoDB" id="1550976at2"/>
<dbReference type="UniPathway" id="UPA00241">
    <property type="reaction ID" value="UER00352"/>
</dbReference>
<dbReference type="Proteomes" id="UP000001365">
    <property type="component" value="Chromosome"/>
</dbReference>
<dbReference type="GO" id="GO:0005737">
    <property type="term" value="C:cytoplasm"/>
    <property type="evidence" value="ECO:0007669"/>
    <property type="project" value="UniProtKB-SubCell"/>
</dbReference>
<dbReference type="GO" id="GO:0005524">
    <property type="term" value="F:ATP binding"/>
    <property type="evidence" value="ECO:0007669"/>
    <property type="project" value="UniProtKB-UniRule"/>
</dbReference>
<dbReference type="GO" id="GO:0004594">
    <property type="term" value="F:pantothenate kinase activity"/>
    <property type="evidence" value="ECO:0007669"/>
    <property type="project" value="UniProtKB-UniRule"/>
</dbReference>
<dbReference type="GO" id="GO:0015937">
    <property type="term" value="P:coenzyme A biosynthetic process"/>
    <property type="evidence" value="ECO:0007669"/>
    <property type="project" value="UniProtKB-UniRule"/>
</dbReference>
<dbReference type="CDD" id="cd02025">
    <property type="entry name" value="PanK"/>
    <property type="match status" value="1"/>
</dbReference>
<dbReference type="Gene3D" id="3.40.50.300">
    <property type="entry name" value="P-loop containing nucleotide triphosphate hydrolases"/>
    <property type="match status" value="1"/>
</dbReference>
<dbReference type="HAMAP" id="MF_00215">
    <property type="entry name" value="Pantothen_kinase_1"/>
    <property type="match status" value="1"/>
</dbReference>
<dbReference type="InterPro" id="IPR027417">
    <property type="entry name" value="P-loop_NTPase"/>
</dbReference>
<dbReference type="InterPro" id="IPR004566">
    <property type="entry name" value="PanK"/>
</dbReference>
<dbReference type="InterPro" id="IPR006083">
    <property type="entry name" value="PRK/URK"/>
</dbReference>
<dbReference type="NCBIfam" id="TIGR00554">
    <property type="entry name" value="panK_bact"/>
    <property type="match status" value="1"/>
</dbReference>
<dbReference type="PANTHER" id="PTHR10285">
    <property type="entry name" value="URIDINE KINASE"/>
    <property type="match status" value="1"/>
</dbReference>
<dbReference type="Pfam" id="PF00485">
    <property type="entry name" value="PRK"/>
    <property type="match status" value="1"/>
</dbReference>
<dbReference type="PIRSF" id="PIRSF000545">
    <property type="entry name" value="Pantothenate_kin"/>
    <property type="match status" value="1"/>
</dbReference>
<dbReference type="SUPFAM" id="SSF52540">
    <property type="entry name" value="P-loop containing nucleoside triphosphate hydrolases"/>
    <property type="match status" value="1"/>
</dbReference>
<sequence length="306" mass="35559">MSNEFITFEKISRKSWKQLHQKSKPLLTQEELTSITSLNDNIDINDVVEVYLPLIHLIQVYKIAQENLSFSKSLFLKKDIQQRPFIIGISGSVAVGKSTTSRLLQLLLARTHKTSTVELVTTDGFLYPNSTLIKNNMLNRKGFPESYNMELLLNFLDTVKGGQTASAPVYSHEIYDIVPDQQQTFTNPDFLIIEGINVFQNQQNNRLYMSDYFDFSIYIDADSHHIEQWYLERFLSLLELAKHDPANYYTRYTSLPQNEAIAFAKKVWKTINLENLEKFIEPTRNRAELILHKAADHKIDEIYLKK</sequence>
<accession>C0M9A7</accession>